<accession>Q8KN28</accession>
<accession>Q93T15</accession>
<accession>Q9RP01</accession>
<dbReference type="EC" id="1.14.13.20"/>
<dbReference type="EMBL" id="AY078159">
    <property type="protein sequence ID" value="AAM76774.1"/>
    <property type="molecule type" value="Genomic_DNA"/>
</dbReference>
<dbReference type="EMBL" id="AF176242">
    <property type="protein sequence ID" value="AAD55079.1"/>
    <property type="molecule type" value="Genomic_DNA"/>
</dbReference>
<dbReference type="SMR" id="Q8KN28"/>
<dbReference type="UniPathway" id="UPA00685"/>
<dbReference type="GO" id="GO:0018666">
    <property type="term" value="F:2,4-dichlorophenol 6-monooxygenase activity"/>
    <property type="evidence" value="ECO:0007669"/>
    <property type="project" value="UniProtKB-EC"/>
</dbReference>
<dbReference type="GO" id="GO:0071949">
    <property type="term" value="F:FAD binding"/>
    <property type="evidence" value="ECO:0007669"/>
    <property type="project" value="InterPro"/>
</dbReference>
<dbReference type="GO" id="GO:0046300">
    <property type="term" value="P:2,4-dichlorophenoxyacetic acid catabolic process"/>
    <property type="evidence" value="ECO:0007669"/>
    <property type="project" value="UniProtKB-UniPathway"/>
</dbReference>
<dbReference type="Gene3D" id="3.40.30.120">
    <property type="match status" value="1"/>
</dbReference>
<dbReference type="Gene3D" id="3.30.9.10">
    <property type="entry name" value="D-Amino Acid Oxidase, subunit A, domain 2"/>
    <property type="match status" value="1"/>
</dbReference>
<dbReference type="Gene3D" id="3.50.50.60">
    <property type="entry name" value="FAD/NAD(P)-binding domain"/>
    <property type="match status" value="1"/>
</dbReference>
<dbReference type="InterPro" id="IPR002938">
    <property type="entry name" value="FAD-bd"/>
</dbReference>
<dbReference type="InterPro" id="IPR036188">
    <property type="entry name" value="FAD/NAD-bd_sf"/>
</dbReference>
<dbReference type="InterPro" id="IPR050641">
    <property type="entry name" value="RIFMO-like"/>
</dbReference>
<dbReference type="PANTHER" id="PTHR43004:SF8">
    <property type="entry name" value="FAD-BINDING DOMAIN-CONTAINING PROTEIN-RELATED"/>
    <property type="match status" value="1"/>
</dbReference>
<dbReference type="PANTHER" id="PTHR43004">
    <property type="entry name" value="TRK SYSTEM POTASSIUM UPTAKE PROTEIN"/>
    <property type="match status" value="1"/>
</dbReference>
<dbReference type="Pfam" id="PF01494">
    <property type="entry name" value="FAD_binding_3"/>
    <property type="match status" value="1"/>
</dbReference>
<dbReference type="Pfam" id="PF21274">
    <property type="entry name" value="Rng_hyd_C"/>
    <property type="match status" value="1"/>
</dbReference>
<dbReference type="PRINTS" id="PR00420">
    <property type="entry name" value="RNGMNOXGNASE"/>
</dbReference>
<dbReference type="SUPFAM" id="SSF51905">
    <property type="entry name" value="FAD/NAD(P)-binding domain"/>
    <property type="match status" value="1"/>
</dbReference>
<organism evidence="5">
    <name type="scientific">Delftia acidovorans</name>
    <name type="common">Pseudomonas acidovorans</name>
    <name type="synonym">Comamonas acidovorans</name>
    <dbReference type="NCBI Taxonomy" id="80866"/>
    <lineage>
        <taxon>Bacteria</taxon>
        <taxon>Pseudomonadati</taxon>
        <taxon>Pseudomonadota</taxon>
        <taxon>Betaproteobacteria</taxon>
        <taxon>Burkholderiales</taxon>
        <taxon>Comamonadaceae</taxon>
        <taxon>Delftia</taxon>
    </lineage>
</organism>
<reference evidence="3" key="1">
    <citation type="journal article" date="2003" name="Microbiology">
        <title>A transposon encoding the complete 2,4-dichlorophenoxyacetic acid degradation pathway in the alkalitolerant strain Delftia acidovorans P4a.</title>
        <authorList>
            <person name="Hoffmann D."/>
            <person name="Kleinsteuber S."/>
            <person name="Mueller R.H."/>
            <person name="Babel W."/>
        </authorList>
    </citation>
    <scope>NUCLEOTIDE SEQUENCE [GENOMIC DNA]</scope>
    <source>
        <strain evidence="5">P4a</strain>
    </source>
</reference>
<reference evidence="3" key="2">
    <citation type="journal article" date="2001" name="Acta Biotechnol.">
        <title>Development and application of PCR primers for the detection of the tfd genes in Delftia acidovorans P4a involved in the degradation of 2,4-D.</title>
        <authorList>
            <person name="Hoffmann D."/>
            <person name="Kleinsteuber S."/>
            <person name="Mueller R.H."/>
            <person name="Babel W."/>
        </authorList>
    </citation>
    <scope>NUCLEOTIDE SEQUENCE [GENOMIC DNA] OF 57-434</scope>
    <source>
        <strain evidence="5">P4a</strain>
    </source>
</reference>
<reference evidence="3" key="3">
    <citation type="journal article" date="2001" name="Microbiol. Res.">
        <title>Physiological and genetic characteristics of two bacterial strains utilizing phenoxypropionate and phenoxyacetate herbicides.</title>
        <authorList>
            <person name="Mueller R.H."/>
            <person name="Kleinsteuber S."/>
            <person name="Babel W."/>
        </authorList>
    </citation>
    <scope>NUCLEOTIDE SEQUENCE [GENOMIC DNA] OF 59-432</scope>
    <source>
        <strain evidence="4">MC1</strain>
    </source>
</reference>
<reference key="4">
    <citation type="journal article" date="2004" name="Microbiology">
        <title>Regulation of catabolic enzymes during long-term exposure of Delftia acidovorans MC1 to chlorophenoxy herbicides.</title>
        <authorList>
            <person name="Benndorf D."/>
            <person name="Davidson I."/>
            <person name="Babel W."/>
        </authorList>
    </citation>
    <scope>PROTEIN SEQUENCE OF 1-19</scope>
    <source>
        <strain>MC1</strain>
    </source>
</reference>
<name>TFDB_DELAC</name>
<evidence type="ECO:0000250" key="1">
    <source>
        <dbReference type="UniProtKB" id="P27138"/>
    </source>
</evidence>
<evidence type="ECO:0000255" key="2"/>
<evidence type="ECO:0000305" key="3"/>
<evidence type="ECO:0000312" key="4">
    <source>
        <dbReference type="EMBL" id="AAD55079.1"/>
    </source>
</evidence>
<evidence type="ECO:0000312" key="5">
    <source>
        <dbReference type="EMBL" id="AAM76774.1"/>
    </source>
</evidence>
<keyword id="KW-0058">Aromatic hydrocarbons catabolism</keyword>
<keyword id="KW-0903">Direct protein sequencing</keyword>
<keyword id="KW-0274">FAD</keyword>
<keyword id="KW-0285">Flavoprotein</keyword>
<keyword id="KW-0503">Monooxygenase</keyword>
<keyword id="KW-0521">NADP</keyword>
<keyword id="KW-0560">Oxidoreductase</keyword>
<protein>
    <recommendedName>
        <fullName>2,4-dichlorophenol 6-monooxygenase</fullName>
        <ecNumber>1.14.13.20</ecNumber>
    </recommendedName>
    <alternativeName>
        <fullName>2,4-dichlorophenol hydroxylase</fullName>
        <shortName>2,4-DCP hydroxylase</shortName>
    </alternativeName>
</protein>
<feature type="chain" id="PRO_0000214050" description="2,4-dichlorophenol 6-monooxygenase">
    <location>
        <begin position="1"/>
        <end position="586"/>
    </location>
</feature>
<feature type="binding site" evidence="2">
    <location>
        <begin position="11"/>
        <end position="40"/>
    </location>
    <ligand>
        <name>FAD</name>
        <dbReference type="ChEBI" id="CHEBI:57692"/>
    </ligand>
</feature>
<feature type="binding site" evidence="2">
    <location>
        <begin position="304"/>
        <end position="314"/>
    </location>
    <ligand>
        <name>FAD</name>
        <dbReference type="ChEBI" id="CHEBI:57692"/>
    </ligand>
</feature>
<feature type="sequence conflict" description="In Ref. 4; AA sequence." evidence="3" ref="4">
    <location>
        <position position="2"/>
    </location>
</feature>
<feature type="sequence conflict" description="In Ref. 4; AA sequence." evidence="3" ref="4">
    <original>G</original>
    <variation>A</variation>
    <location>
        <position position="18"/>
    </location>
</feature>
<feature type="sequence conflict" description="In Ref. 3; AAD55079." evidence="3" ref="3">
    <original>M</original>
    <variation>V</variation>
    <location>
        <position position="195"/>
    </location>
</feature>
<proteinExistence type="evidence at protein level"/>
<gene>
    <name type="primary">tfdB</name>
</gene>
<comment type="function">
    <text evidence="1">Transforms 2,4-dichlorophenol (2,4-DCP) into 3,5-dichlorocatechol.</text>
</comment>
<comment type="catalytic activity">
    <reaction evidence="1">
        <text>2,4-dichlorophenol + NADPH + O2 + H(+) = 3,5-dichlorocatechol + NADP(+) + H2O</text>
        <dbReference type="Rhea" id="RHEA:20920"/>
        <dbReference type="ChEBI" id="CHEBI:15377"/>
        <dbReference type="ChEBI" id="CHEBI:15378"/>
        <dbReference type="ChEBI" id="CHEBI:15379"/>
        <dbReference type="ChEBI" id="CHEBI:15788"/>
        <dbReference type="ChEBI" id="CHEBI:16738"/>
        <dbReference type="ChEBI" id="CHEBI:57783"/>
        <dbReference type="ChEBI" id="CHEBI:58349"/>
        <dbReference type="EC" id="1.14.13.20"/>
    </reaction>
</comment>
<comment type="cofactor">
    <cofactor evidence="1">
        <name>FAD</name>
        <dbReference type="ChEBI" id="CHEBI:57692"/>
    </cofactor>
</comment>
<comment type="pathway">
    <text>Xenobiotic degradation; (2,4-dichlorophenoxy)acetate degradation.</text>
</comment>
<comment type="subunit">
    <text evidence="1">Homotetramer.</text>
</comment>
<comment type="similarity">
    <text evidence="3">Belongs to the PheA/TfdB FAD monooxygenase family.</text>
</comment>
<sequence length="586" mass="64405">MNEKATVIETDVLVVGSGPAGAASTLLLATYGVKTLCVSKYATTSRTPRSHITNQRTMEVMRDLGLELECEAMASPAELMGENVYCTSLVGDELGRVLTWGTHPQRRADYELASPTHMCDLPQNLLEPIMINHAARRGADVRFHTEFVSLKQDETGVTATVRDHLLDRQYDIRAKYLIGADGANSQVVDQVGLPMEGKMGVSGSINVVFEADLTKYVGHRPSVLYWVIQPGSSVGGLGIGVIRMVRPWNKWLCIWGYDIAGGPPDLNEAHARQIVHSLLGDSTIPVKIESTSTWTVNDMYATRLFDNRVFCMGDAVHRHPPTNGLGSNTSIQDAFNLCWKLSHVLQGKAGPELLATYNEERAPVARQVVQRANKSLGDFPPILAALGLFDTKDPEQMQRNIARLKEQSPEAQEQRAALRAAIDGTQYVYNAHGVEMNQRYQSAAIVPDGTPDPGFRRDSELYHAHSGRPGAPVPHVWVTRHGRRVSTLDLCGKGRFSLLSGIAGSPWVEAAVHAAESLGIDLDVHIIGPGQELEDLYGDFARVREIEESGALLVRPDNFICWRAMRWQEGSGDELRAALKRVLSVH</sequence>